<sequence>MGNCVGRQRRERPAAPGHPRKRAGRNEPLKKERLKWKSDYPMTDGQLRSKRDEFWDTAPAFEGRKEIWDALKAAAYAAEANDHELAQAILDGASITLPHGTLCECYDELGNRYQLPIYCLSPPVNLLLEHTEEESLEPPEPTPSVRREFPLKVRLSTGKDVRLNASLPDTVGQLKRQLHSQEGIEPSWQRWFFSGKLLTDRTRLQETKIQKDFVIQVIINQPPPPQD</sequence>
<evidence type="ECO:0000250" key="1">
    <source>
        <dbReference type="UniProtKB" id="Q9HAC8"/>
    </source>
</evidence>
<evidence type="ECO:0000255" key="2">
    <source>
        <dbReference type="PROSITE-ProRule" id="PRU00214"/>
    </source>
</evidence>
<evidence type="ECO:0000256" key="3">
    <source>
        <dbReference type="SAM" id="MobiDB-lite"/>
    </source>
</evidence>
<dbReference type="EMBL" id="AK078479">
    <property type="protein sequence ID" value="BAC37298.1"/>
    <property type="molecule type" value="mRNA"/>
</dbReference>
<dbReference type="EMBL" id="BC016129">
    <property type="protein sequence ID" value="AAH16129.1"/>
    <property type="molecule type" value="mRNA"/>
</dbReference>
<dbReference type="CCDS" id="CCDS29819.1"/>
<dbReference type="RefSeq" id="NP_663475.1">
    <property type="nucleotide sequence ID" value="NM_145500.3"/>
</dbReference>
<dbReference type="SMR" id="Q91WB7"/>
<dbReference type="FunCoup" id="Q91WB7">
    <property type="interactions" value="61"/>
</dbReference>
<dbReference type="STRING" id="10090.ENSMUSP00000026170"/>
<dbReference type="GlyGen" id="Q91WB7">
    <property type="glycosylation" value="1 site"/>
</dbReference>
<dbReference type="iPTMnet" id="Q91WB7"/>
<dbReference type="PhosphoSitePlus" id="Q91WB7"/>
<dbReference type="SwissPalm" id="Q91WB7"/>
<dbReference type="PaxDb" id="10090-ENSMUSP00000026170"/>
<dbReference type="PeptideAtlas" id="Q91WB7"/>
<dbReference type="ProteomicsDB" id="298424"/>
<dbReference type="Pumba" id="Q91WB7"/>
<dbReference type="Antibodypedia" id="30969">
    <property type="antibodies" value="313 antibodies from 28 providers"/>
</dbReference>
<dbReference type="DNASU" id="226122"/>
<dbReference type="Ensembl" id="ENSMUST00000026170.3">
    <property type="protein sequence ID" value="ENSMUSP00000026170.2"/>
    <property type="gene ID" value="ENSMUSG00000025171.3"/>
</dbReference>
<dbReference type="GeneID" id="226122"/>
<dbReference type="KEGG" id="mmu:226122"/>
<dbReference type="UCSC" id="uc008hmz.1">
    <property type="organism name" value="mouse"/>
</dbReference>
<dbReference type="AGR" id="MGI:2385092"/>
<dbReference type="CTD" id="80019"/>
<dbReference type="MGI" id="MGI:2385092">
    <property type="gene designation" value="Ubtd1"/>
</dbReference>
<dbReference type="VEuPathDB" id="HostDB:ENSMUSG00000025171"/>
<dbReference type="eggNOG" id="KOG0013">
    <property type="taxonomic scope" value="Eukaryota"/>
</dbReference>
<dbReference type="GeneTree" id="ENSGT00940000158630"/>
<dbReference type="HOGENOM" id="CLU_070348_0_0_1"/>
<dbReference type="InParanoid" id="Q91WB7"/>
<dbReference type="OMA" id="GCMGRYL"/>
<dbReference type="OrthoDB" id="1640476at2759"/>
<dbReference type="PhylomeDB" id="Q91WB7"/>
<dbReference type="TreeFam" id="TF323925"/>
<dbReference type="BioGRID-ORCS" id="226122">
    <property type="hits" value="4 hits in 79 CRISPR screens"/>
</dbReference>
<dbReference type="ChiTaRS" id="Ubtd1">
    <property type="organism name" value="mouse"/>
</dbReference>
<dbReference type="PRO" id="PR:Q91WB7"/>
<dbReference type="Proteomes" id="UP000000589">
    <property type="component" value="Chromosome 19"/>
</dbReference>
<dbReference type="RNAct" id="Q91WB7">
    <property type="molecule type" value="protein"/>
</dbReference>
<dbReference type="Bgee" id="ENSMUSG00000025171">
    <property type="expression patterns" value="Expressed in spermatid and 128 other cell types or tissues"/>
</dbReference>
<dbReference type="CDD" id="cd17120">
    <property type="entry name" value="Ubl_UBTD1"/>
    <property type="match status" value="1"/>
</dbReference>
<dbReference type="Gene3D" id="3.10.20.90">
    <property type="entry name" value="Phosphatidylinositol 3-kinase Catalytic Subunit, Chain A, domain 1"/>
    <property type="match status" value="1"/>
</dbReference>
<dbReference type="Gene3D" id="1.20.225.20">
    <property type="entry name" value="Ub domain-containing protein, DC-UbP/UBTD2, N-terminal domain"/>
    <property type="match status" value="1"/>
</dbReference>
<dbReference type="InterPro" id="IPR032752">
    <property type="entry name" value="DC-UbP/UBTD2_N"/>
</dbReference>
<dbReference type="InterPro" id="IPR038169">
    <property type="entry name" value="DC-UbP/UBTD2_N_sf"/>
</dbReference>
<dbReference type="InterPro" id="IPR000626">
    <property type="entry name" value="Ubiquitin-like_dom"/>
</dbReference>
<dbReference type="InterPro" id="IPR029071">
    <property type="entry name" value="Ubiquitin-like_domsf"/>
</dbReference>
<dbReference type="InterPro" id="IPR019956">
    <property type="entry name" value="Ubiquitin_dom"/>
</dbReference>
<dbReference type="InterPro" id="IPR039869">
    <property type="entry name" value="UBTD1/2"/>
</dbReference>
<dbReference type="PANTHER" id="PTHR13609">
    <property type="entry name" value="UBIQUITIN DOMAIN CONTAINING 1 PROTEIN-RELATED"/>
    <property type="match status" value="1"/>
</dbReference>
<dbReference type="Pfam" id="PF16455">
    <property type="entry name" value="UBD"/>
    <property type="match status" value="1"/>
</dbReference>
<dbReference type="Pfam" id="PF00240">
    <property type="entry name" value="ubiquitin"/>
    <property type="match status" value="1"/>
</dbReference>
<dbReference type="PRINTS" id="PR00348">
    <property type="entry name" value="UBIQUITIN"/>
</dbReference>
<dbReference type="SMART" id="SM00213">
    <property type="entry name" value="UBQ"/>
    <property type="match status" value="1"/>
</dbReference>
<dbReference type="SUPFAM" id="SSF54236">
    <property type="entry name" value="Ubiquitin-like"/>
    <property type="match status" value="1"/>
</dbReference>
<dbReference type="PROSITE" id="PS50053">
    <property type="entry name" value="UBIQUITIN_2"/>
    <property type="match status" value="1"/>
</dbReference>
<organism>
    <name type="scientific">Mus musculus</name>
    <name type="common">Mouse</name>
    <dbReference type="NCBI Taxonomy" id="10090"/>
    <lineage>
        <taxon>Eukaryota</taxon>
        <taxon>Metazoa</taxon>
        <taxon>Chordata</taxon>
        <taxon>Craniata</taxon>
        <taxon>Vertebrata</taxon>
        <taxon>Euteleostomi</taxon>
        <taxon>Mammalia</taxon>
        <taxon>Eutheria</taxon>
        <taxon>Euarchontoglires</taxon>
        <taxon>Glires</taxon>
        <taxon>Rodentia</taxon>
        <taxon>Myomorpha</taxon>
        <taxon>Muroidea</taxon>
        <taxon>Muridae</taxon>
        <taxon>Murinae</taxon>
        <taxon>Mus</taxon>
        <taxon>Mus</taxon>
    </lineage>
</organism>
<protein>
    <recommendedName>
        <fullName>Ubiquitin domain-containing protein 1</fullName>
    </recommendedName>
</protein>
<keyword id="KW-1185">Reference proteome</keyword>
<comment type="function">
    <text evidence="1">May be involved in the regulation of cellular senescence through a positive feedback loop with TP53. Is a TP53 downstream target gene that increases the stability of TP53 protein by promoting the ubiquitination and degradation of MDM2.</text>
</comment>
<comment type="subunit">
    <text evidence="1">Interacts with UBTD1.</text>
</comment>
<gene>
    <name type="primary">Ubtd1</name>
</gene>
<name>UBTD1_MOUSE</name>
<reference key="1">
    <citation type="journal article" date="2005" name="Science">
        <title>The transcriptional landscape of the mammalian genome.</title>
        <authorList>
            <person name="Carninci P."/>
            <person name="Kasukawa T."/>
            <person name="Katayama S."/>
            <person name="Gough J."/>
            <person name="Frith M.C."/>
            <person name="Maeda N."/>
            <person name="Oyama R."/>
            <person name="Ravasi T."/>
            <person name="Lenhard B."/>
            <person name="Wells C."/>
            <person name="Kodzius R."/>
            <person name="Shimokawa K."/>
            <person name="Bajic V.B."/>
            <person name="Brenner S.E."/>
            <person name="Batalov S."/>
            <person name="Forrest A.R."/>
            <person name="Zavolan M."/>
            <person name="Davis M.J."/>
            <person name="Wilming L.G."/>
            <person name="Aidinis V."/>
            <person name="Allen J.E."/>
            <person name="Ambesi-Impiombato A."/>
            <person name="Apweiler R."/>
            <person name="Aturaliya R.N."/>
            <person name="Bailey T.L."/>
            <person name="Bansal M."/>
            <person name="Baxter L."/>
            <person name="Beisel K.W."/>
            <person name="Bersano T."/>
            <person name="Bono H."/>
            <person name="Chalk A.M."/>
            <person name="Chiu K.P."/>
            <person name="Choudhary V."/>
            <person name="Christoffels A."/>
            <person name="Clutterbuck D.R."/>
            <person name="Crowe M.L."/>
            <person name="Dalla E."/>
            <person name="Dalrymple B.P."/>
            <person name="de Bono B."/>
            <person name="Della Gatta G."/>
            <person name="di Bernardo D."/>
            <person name="Down T."/>
            <person name="Engstrom P."/>
            <person name="Fagiolini M."/>
            <person name="Faulkner G."/>
            <person name="Fletcher C.F."/>
            <person name="Fukushima T."/>
            <person name="Furuno M."/>
            <person name="Futaki S."/>
            <person name="Gariboldi M."/>
            <person name="Georgii-Hemming P."/>
            <person name="Gingeras T.R."/>
            <person name="Gojobori T."/>
            <person name="Green R.E."/>
            <person name="Gustincich S."/>
            <person name="Harbers M."/>
            <person name="Hayashi Y."/>
            <person name="Hensch T.K."/>
            <person name="Hirokawa N."/>
            <person name="Hill D."/>
            <person name="Huminiecki L."/>
            <person name="Iacono M."/>
            <person name="Ikeo K."/>
            <person name="Iwama A."/>
            <person name="Ishikawa T."/>
            <person name="Jakt M."/>
            <person name="Kanapin A."/>
            <person name="Katoh M."/>
            <person name="Kawasawa Y."/>
            <person name="Kelso J."/>
            <person name="Kitamura H."/>
            <person name="Kitano H."/>
            <person name="Kollias G."/>
            <person name="Krishnan S.P."/>
            <person name="Kruger A."/>
            <person name="Kummerfeld S.K."/>
            <person name="Kurochkin I.V."/>
            <person name="Lareau L.F."/>
            <person name="Lazarevic D."/>
            <person name="Lipovich L."/>
            <person name="Liu J."/>
            <person name="Liuni S."/>
            <person name="McWilliam S."/>
            <person name="Madan Babu M."/>
            <person name="Madera M."/>
            <person name="Marchionni L."/>
            <person name="Matsuda H."/>
            <person name="Matsuzawa S."/>
            <person name="Miki H."/>
            <person name="Mignone F."/>
            <person name="Miyake S."/>
            <person name="Morris K."/>
            <person name="Mottagui-Tabar S."/>
            <person name="Mulder N."/>
            <person name="Nakano N."/>
            <person name="Nakauchi H."/>
            <person name="Ng P."/>
            <person name="Nilsson R."/>
            <person name="Nishiguchi S."/>
            <person name="Nishikawa S."/>
            <person name="Nori F."/>
            <person name="Ohara O."/>
            <person name="Okazaki Y."/>
            <person name="Orlando V."/>
            <person name="Pang K.C."/>
            <person name="Pavan W.J."/>
            <person name="Pavesi G."/>
            <person name="Pesole G."/>
            <person name="Petrovsky N."/>
            <person name="Piazza S."/>
            <person name="Reed J."/>
            <person name="Reid J.F."/>
            <person name="Ring B.Z."/>
            <person name="Ringwald M."/>
            <person name="Rost B."/>
            <person name="Ruan Y."/>
            <person name="Salzberg S.L."/>
            <person name="Sandelin A."/>
            <person name="Schneider C."/>
            <person name="Schoenbach C."/>
            <person name="Sekiguchi K."/>
            <person name="Semple C.A."/>
            <person name="Seno S."/>
            <person name="Sessa L."/>
            <person name="Sheng Y."/>
            <person name="Shibata Y."/>
            <person name="Shimada H."/>
            <person name="Shimada K."/>
            <person name="Silva D."/>
            <person name="Sinclair B."/>
            <person name="Sperling S."/>
            <person name="Stupka E."/>
            <person name="Sugiura K."/>
            <person name="Sultana R."/>
            <person name="Takenaka Y."/>
            <person name="Taki K."/>
            <person name="Tammoja K."/>
            <person name="Tan S.L."/>
            <person name="Tang S."/>
            <person name="Taylor M.S."/>
            <person name="Tegner J."/>
            <person name="Teichmann S.A."/>
            <person name="Ueda H.R."/>
            <person name="van Nimwegen E."/>
            <person name="Verardo R."/>
            <person name="Wei C.L."/>
            <person name="Yagi K."/>
            <person name="Yamanishi H."/>
            <person name="Zabarovsky E."/>
            <person name="Zhu S."/>
            <person name="Zimmer A."/>
            <person name="Hide W."/>
            <person name="Bult C."/>
            <person name="Grimmond S.M."/>
            <person name="Teasdale R.D."/>
            <person name="Liu E.T."/>
            <person name="Brusic V."/>
            <person name="Quackenbush J."/>
            <person name="Wahlestedt C."/>
            <person name="Mattick J.S."/>
            <person name="Hume D.A."/>
            <person name="Kai C."/>
            <person name="Sasaki D."/>
            <person name="Tomaru Y."/>
            <person name="Fukuda S."/>
            <person name="Kanamori-Katayama M."/>
            <person name="Suzuki M."/>
            <person name="Aoki J."/>
            <person name="Arakawa T."/>
            <person name="Iida J."/>
            <person name="Imamura K."/>
            <person name="Itoh M."/>
            <person name="Kato T."/>
            <person name="Kawaji H."/>
            <person name="Kawagashira N."/>
            <person name="Kawashima T."/>
            <person name="Kojima M."/>
            <person name="Kondo S."/>
            <person name="Konno H."/>
            <person name="Nakano K."/>
            <person name="Ninomiya N."/>
            <person name="Nishio T."/>
            <person name="Okada M."/>
            <person name="Plessy C."/>
            <person name="Shibata K."/>
            <person name="Shiraki T."/>
            <person name="Suzuki S."/>
            <person name="Tagami M."/>
            <person name="Waki K."/>
            <person name="Watahiki A."/>
            <person name="Okamura-Oho Y."/>
            <person name="Suzuki H."/>
            <person name="Kawai J."/>
            <person name="Hayashizaki Y."/>
        </authorList>
    </citation>
    <scope>NUCLEOTIDE SEQUENCE [LARGE SCALE MRNA]</scope>
    <source>
        <strain>C57BL/6J</strain>
        <tissue>Muellerian duct</tissue>
    </source>
</reference>
<reference key="2">
    <citation type="journal article" date="2004" name="Genome Res.">
        <title>The status, quality, and expansion of the NIH full-length cDNA project: the Mammalian Gene Collection (MGC).</title>
        <authorList>
            <consortium name="The MGC Project Team"/>
        </authorList>
    </citation>
    <scope>NUCLEOTIDE SEQUENCE [LARGE SCALE MRNA]</scope>
    <source>
        <strain>FVB/N</strain>
        <tissue>Salivary gland</tissue>
    </source>
</reference>
<accession>Q91WB7</accession>
<feature type="chain" id="PRO_0000242675" description="Ubiquitin domain-containing protein 1">
    <location>
        <begin position="1"/>
        <end position="227"/>
    </location>
</feature>
<feature type="domain" description="Ubiquitin-like" evidence="2">
    <location>
        <begin position="149"/>
        <end position="224"/>
    </location>
</feature>
<feature type="region of interest" description="Disordered" evidence="3">
    <location>
        <begin position="1"/>
        <end position="42"/>
    </location>
</feature>
<feature type="compositionally biased region" description="Basic and acidic residues" evidence="3">
    <location>
        <begin position="24"/>
        <end position="38"/>
    </location>
</feature>
<proteinExistence type="evidence at transcript level"/>